<dbReference type="EC" id="5.4.3.8" evidence="1"/>
<dbReference type="EMBL" id="AM263198">
    <property type="protein sequence ID" value="CAK21121.1"/>
    <property type="molecule type" value="Genomic_DNA"/>
</dbReference>
<dbReference type="RefSeq" id="WP_011702485.1">
    <property type="nucleotide sequence ID" value="NC_008555.1"/>
</dbReference>
<dbReference type="SMR" id="A0AJD9"/>
<dbReference type="STRING" id="386043.lwe1703"/>
<dbReference type="GeneID" id="61189603"/>
<dbReference type="KEGG" id="lwe:lwe1703"/>
<dbReference type="eggNOG" id="COG0001">
    <property type="taxonomic scope" value="Bacteria"/>
</dbReference>
<dbReference type="HOGENOM" id="CLU_016922_1_5_9"/>
<dbReference type="OrthoDB" id="9807885at2"/>
<dbReference type="UniPathway" id="UPA00251">
    <property type="reaction ID" value="UER00317"/>
</dbReference>
<dbReference type="Proteomes" id="UP000000779">
    <property type="component" value="Chromosome"/>
</dbReference>
<dbReference type="GO" id="GO:0005737">
    <property type="term" value="C:cytoplasm"/>
    <property type="evidence" value="ECO:0007669"/>
    <property type="project" value="UniProtKB-SubCell"/>
</dbReference>
<dbReference type="GO" id="GO:0042286">
    <property type="term" value="F:glutamate-1-semialdehyde 2,1-aminomutase activity"/>
    <property type="evidence" value="ECO:0007669"/>
    <property type="project" value="UniProtKB-UniRule"/>
</dbReference>
<dbReference type="GO" id="GO:0030170">
    <property type="term" value="F:pyridoxal phosphate binding"/>
    <property type="evidence" value="ECO:0007669"/>
    <property type="project" value="InterPro"/>
</dbReference>
<dbReference type="GO" id="GO:0008483">
    <property type="term" value="F:transaminase activity"/>
    <property type="evidence" value="ECO:0007669"/>
    <property type="project" value="InterPro"/>
</dbReference>
<dbReference type="GO" id="GO:0006782">
    <property type="term" value="P:protoporphyrinogen IX biosynthetic process"/>
    <property type="evidence" value="ECO:0007669"/>
    <property type="project" value="UniProtKB-UniRule"/>
</dbReference>
<dbReference type="CDD" id="cd00610">
    <property type="entry name" value="OAT_like"/>
    <property type="match status" value="1"/>
</dbReference>
<dbReference type="FunFam" id="3.40.640.10:FF:000021">
    <property type="entry name" value="Glutamate-1-semialdehyde 2,1-aminomutase"/>
    <property type="match status" value="1"/>
</dbReference>
<dbReference type="Gene3D" id="3.90.1150.10">
    <property type="entry name" value="Aspartate Aminotransferase, domain 1"/>
    <property type="match status" value="1"/>
</dbReference>
<dbReference type="Gene3D" id="3.40.640.10">
    <property type="entry name" value="Type I PLP-dependent aspartate aminotransferase-like (Major domain)"/>
    <property type="match status" value="1"/>
</dbReference>
<dbReference type="HAMAP" id="MF_00375">
    <property type="entry name" value="HemL_aminotrans_3"/>
    <property type="match status" value="1"/>
</dbReference>
<dbReference type="InterPro" id="IPR004639">
    <property type="entry name" value="4pyrrol_synth_GluAld_NH2Trfase"/>
</dbReference>
<dbReference type="InterPro" id="IPR005814">
    <property type="entry name" value="Aminotrans_3"/>
</dbReference>
<dbReference type="InterPro" id="IPR049704">
    <property type="entry name" value="Aminotrans_3_PPA_site"/>
</dbReference>
<dbReference type="InterPro" id="IPR015424">
    <property type="entry name" value="PyrdxlP-dep_Trfase"/>
</dbReference>
<dbReference type="InterPro" id="IPR015421">
    <property type="entry name" value="PyrdxlP-dep_Trfase_major"/>
</dbReference>
<dbReference type="InterPro" id="IPR015422">
    <property type="entry name" value="PyrdxlP-dep_Trfase_small"/>
</dbReference>
<dbReference type="NCBIfam" id="TIGR00713">
    <property type="entry name" value="hemL"/>
    <property type="match status" value="1"/>
</dbReference>
<dbReference type="NCBIfam" id="NF000818">
    <property type="entry name" value="PRK00062.1"/>
    <property type="match status" value="1"/>
</dbReference>
<dbReference type="NCBIfam" id="NF009055">
    <property type="entry name" value="PRK12389.1"/>
    <property type="match status" value="1"/>
</dbReference>
<dbReference type="PANTHER" id="PTHR43713">
    <property type="entry name" value="GLUTAMATE-1-SEMIALDEHYDE 2,1-AMINOMUTASE"/>
    <property type="match status" value="1"/>
</dbReference>
<dbReference type="PANTHER" id="PTHR43713:SF1">
    <property type="entry name" value="GLUTAMATE-1-SEMIALDEHYDE 2,1-AMINOMUTASE 2"/>
    <property type="match status" value="1"/>
</dbReference>
<dbReference type="Pfam" id="PF00202">
    <property type="entry name" value="Aminotran_3"/>
    <property type="match status" value="1"/>
</dbReference>
<dbReference type="SUPFAM" id="SSF53383">
    <property type="entry name" value="PLP-dependent transferases"/>
    <property type="match status" value="1"/>
</dbReference>
<dbReference type="PROSITE" id="PS00600">
    <property type="entry name" value="AA_TRANSFER_CLASS_3"/>
    <property type="match status" value="1"/>
</dbReference>
<organism>
    <name type="scientific">Listeria welshimeri serovar 6b (strain ATCC 35897 / DSM 20650 / CCUG 15529 / CIP 8149 / NCTC 11857 / SLCC 5334 / V8)</name>
    <dbReference type="NCBI Taxonomy" id="386043"/>
    <lineage>
        <taxon>Bacteria</taxon>
        <taxon>Bacillati</taxon>
        <taxon>Bacillota</taxon>
        <taxon>Bacilli</taxon>
        <taxon>Bacillales</taxon>
        <taxon>Listeriaceae</taxon>
        <taxon>Listeria</taxon>
    </lineage>
</organism>
<gene>
    <name evidence="1" type="primary">hemL2</name>
    <name type="ordered locus">lwe1703</name>
</gene>
<name>GSA2_LISW6</name>
<sequence length="432" mass="46100">MDHSMSKKLHDEALLHIVGGVNSPSRSNKGVGGGIPVTMERANGAYFYDVDGNKYIDYLAAFGPIITGHAHPHITEAITKAAQNGVLYGTPTKHEITFAKMLKEAIPSLEKVRFTNSGTEAVMTTIRVARAYTGRDKIIKFAGCYHGHFDLVLVEAGSGPSTLGIPDSAGVTKSTAEEVITVPFNDLASFKEALATWGNQVAAVLVEPIVGNFGMVEPAEGFLEAINELAHENGSLVIYDEVITAFRFMYGGAQNYLGVIPDLTAMGKIIGGGLPIGAYGGRIDIMEKVAPLGPAYQAGTHAGNPASILSGIACLEVLQEEGLYDRFQKYGSMLKDGIEKAAVKHGIAVTVNQIVGALTVYFTDEPVTNYAEAGATNGDLFGRFFKGMLEEGINLAPSKYEAWFITSAHSEADILETIQAVDTVFAKMVQDK</sequence>
<keyword id="KW-0963">Cytoplasm</keyword>
<keyword id="KW-0413">Isomerase</keyword>
<keyword id="KW-0627">Porphyrin biosynthesis</keyword>
<keyword id="KW-0663">Pyridoxal phosphate</keyword>
<accession>A0AJD9</accession>
<comment type="catalytic activity">
    <reaction evidence="1">
        <text>(S)-4-amino-5-oxopentanoate = 5-aminolevulinate</text>
        <dbReference type="Rhea" id="RHEA:14265"/>
        <dbReference type="ChEBI" id="CHEBI:57501"/>
        <dbReference type="ChEBI" id="CHEBI:356416"/>
        <dbReference type="EC" id="5.4.3.8"/>
    </reaction>
</comment>
<comment type="cofactor">
    <cofactor evidence="1">
        <name>pyridoxal 5'-phosphate</name>
        <dbReference type="ChEBI" id="CHEBI:597326"/>
    </cofactor>
</comment>
<comment type="pathway">
    <text evidence="1">Porphyrin-containing compound metabolism; protoporphyrin-IX biosynthesis; 5-aminolevulinate from L-glutamyl-tRNA(Glu): step 2/2.</text>
</comment>
<comment type="subunit">
    <text evidence="1">Homodimer.</text>
</comment>
<comment type="subcellular location">
    <subcellularLocation>
        <location evidence="1">Cytoplasm</location>
    </subcellularLocation>
</comment>
<comment type="similarity">
    <text evidence="1">Belongs to the class-III pyridoxal-phosphate-dependent aminotransferase family. HemL subfamily.</text>
</comment>
<reference key="1">
    <citation type="journal article" date="2006" name="J. Bacteriol.">
        <title>Whole-genome sequence of Listeria welshimeri reveals common steps in genome reduction with Listeria innocua as compared to Listeria monocytogenes.</title>
        <authorList>
            <person name="Hain T."/>
            <person name="Steinweg C."/>
            <person name="Kuenne C.T."/>
            <person name="Billion A."/>
            <person name="Ghai R."/>
            <person name="Chatterjee S.S."/>
            <person name="Domann E."/>
            <person name="Kaerst U."/>
            <person name="Goesmann A."/>
            <person name="Bekel T."/>
            <person name="Bartels D."/>
            <person name="Kaiser O."/>
            <person name="Meyer F."/>
            <person name="Puehler A."/>
            <person name="Weisshaar B."/>
            <person name="Wehland J."/>
            <person name="Liang C."/>
            <person name="Dandekar T."/>
            <person name="Lampidis R."/>
            <person name="Kreft J."/>
            <person name="Goebel W."/>
            <person name="Chakraborty T."/>
        </authorList>
    </citation>
    <scope>NUCLEOTIDE SEQUENCE [LARGE SCALE GENOMIC DNA]</scope>
    <source>
        <strain>ATCC 35897 / DSM 20650 / CCUG 15529 / CIP 8149 / NCTC 11857 / SLCC 5334 / V8</strain>
    </source>
</reference>
<evidence type="ECO:0000255" key="1">
    <source>
        <dbReference type="HAMAP-Rule" id="MF_00375"/>
    </source>
</evidence>
<protein>
    <recommendedName>
        <fullName evidence="1">Glutamate-1-semialdehyde 2,1-aminomutase 2</fullName>
        <shortName evidence="1">GSA 2</shortName>
        <ecNumber evidence="1">5.4.3.8</ecNumber>
    </recommendedName>
    <alternativeName>
        <fullName evidence="1">Glutamate-1-semialdehyde aminotransferase 2</fullName>
        <shortName evidence="1">GSA-AT 2</shortName>
    </alternativeName>
</protein>
<feature type="chain" id="PRO_0000382337" description="Glutamate-1-semialdehyde 2,1-aminomutase 2">
    <location>
        <begin position="1"/>
        <end position="432"/>
    </location>
</feature>
<feature type="modified residue" description="N6-(pyridoxal phosphate)lysine" evidence="1">
    <location>
        <position position="268"/>
    </location>
</feature>
<proteinExistence type="inferred from homology"/>